<comment type="function">
    <text evidence="4">Displays aspartic proteolytic activity (PubMed:27872247). Together with A36, contributes to pollen and ovule development, including the apical cell wall constitution of the growing pollen tubes (PubMed:27872247).</text>
</comment>
<comment type="subcellular location">
    <subcellularLocation>
        <location evidence="4">Cell membrane</location>
        <topology evidence="1">Lipid-anchor</topology>
        <topology evidence="1">GPI-anchor</topology>
    </subcellularLocation>
    <subcellularLocation>
        <location evidence="4">Cytoplasm</location>
        <location evidence="4">Cytosol</location>
    </subcellularLocation>
    <text evidence="4">Displays punctate cytosolic localization and colocalizes with the GPI-anchored protein COBL10 at the plasma membrane and in the cytosol (PubMed:27872247). In pollen grains, mainly present at the plasma membrane and in reticular structures in the cytosol (PubMed:27872247). In pollen tubes, exhibits a punctate localization in the cytosol and occurs weakly at the plasma membrane (PubMed:27872247).</text>
</comment>
<comment type="tissue specificity">
    <text evidence="4">Highly expressed in pollen and pollen tubes (PubMed:27872247). Mostly expressed in inflorescence, flowers and siliques, and barely in leaves and seedlings (PubMed:27872247).</text>
</comment>
<comment type="developmental stage">
    <text evidence="4">In flowers, expressed in the pollen and growing pollen tubes (PubMed:27872247). During microspore development, observed expressed from tetrad to tricellular pollen (PubMed:27872247). Also present in young siliques and developing ovules (PubMed:27872247).</text>
</comment>
<comment type="disruption phenotype">
    <text evidence="4">The double mutant a36 a39 produces inviable pollen which undergoes apoptosis-like programmed cell death, exhibits a compromised pollen tubes micropylar guidance and has degenerated female gametes (PubMed:27872247). The double mutant a36 a39 accumulates abnormally highly methylesterified homogalacturonans and xyloglucans in the apical pollen tube wall (PubMed:27872247).</text>
</comment>
<comment type="similarity">
    <text evidence="3 6">Belongs to the peptidase A1 family.</text>
</comment>
<comment type="sequence caution" evidence="6">
    <conflict type="erroneous gene model prediction">
        <sequence resource="EMBL-CDS" id="AAD26876"/>
    </conflict>
</comment>
<proteinExistence type="evidence at protein level"/>
<accession>Q9S9K4</accession>
<sequence length="475" mass="51828">MELRRKLCIVVAVFVIVIEFASANFVFKAQHKFAGKKKNLEHFKSHDTRRHSRMLASIDLPLGGDSRVDSVGLYFTKIKLGSPPKEYHVQVDTGSDILWINCKPCPKCPTKTNLNFRLSLFDMNASSTSKKVGCDDDFCSFISQSDSCQPALGCSYHIVYADESTSDGKFIRDMLTLEQVTGDLKTGPLGQEVVFGCGSDQSGQLGNGDSAVDGVMGFGQSNTSVLSQLAATGDAKRVFSHCLDNVKGGGIFAVGVVDSPKVKTTPMVPNQMHYNVMLMGMDVDGTSLDLPRSIVRNGGTIVDSGTTLAYFPKVLYDSLIETILARQPVKLHIVEETFQCFSFSTNVDEAFPPVSFEFEDSVKLTVYPHDYLFTLEEELYCFGWQAGGLTTDERSEVILLGDLVLSNKLVVYDLDNEVIGWADHNCSSSIKIKDGSGGVYSVGADNLSSAPRLLMITKLLTILSPLIVMAFTSLA</sequence>
<dbReference type="EC" id="3.4.23.-" evidence="4"/>
<dbReference type="EMBL" id="AC007230">
    <property type="protein sequence ID" value="AAD26876.1"/>
    <property type="status" value="ALT_SEQ"/>
    <property type="molecule type" value="Genomic_DNA"/>
</dbReference>
<dbReference type="EMBL" id="CP002684">
    <property type="protein sequence ID" value="AEE34347.1"/>
    <property type="molecule type" value="Genomic_DNA"/>
</dbReference>
<dbReference type="PIR" id="E96676">
    <property type="entry name" value="E96676"/>
</dbReference>
<dbReference type="RefSeq" id="NP_176703.1">
    <property type="nucleotide sequence ID" value="NM_105197.3"/>
</dbReference>
<dbReference type="SMR" id="Q9S9K4"/>
<dbReference type="FunCoup" id="Q9S9K4">
    <property type="interactions" value="57"/>
</dbReference>
<dbReference type="STRING" id="3702.Q9S9K4"/>
<dbReference type="MEROPS" id="A01.A37"/>
<dbReference type="GlyCosmos" id="Q9S9K4">
    <property type="glycosylation" value="4 sites, No reported glycans"/>
</dbReference>
<dbReference type="GlyGen" id="Q9S9K4">
    <property type="glycosylation" value="4 sites"/>
</dbReference>
<dbReference type="PaxDb" id="3702-AT1G65240.1"/>
<dbReference type="ProteomicsDB" id="246699"/>
<dbReference type="EnsemblPlants" id="AT1G65240.1">
    <property type="protein sequence ID" value="AT1G65240.1"/>
    <property type="gene ID" value="AT1G65240"/>
</dbReference>
<dbReference type="GeneID" id="842831"/>
<dbReference type="Gramene" id="AT1G65240.1">
    <property type="protein sequence ID" value="AT1G65240.1"/>
    <property type="gene ID" value="AT1G65240"/>
</dbReference>
<dbReference type="KEGG" id="ath:AT1G65240"/>
<dbReference type="Araport" id="AT1G65240"/>
<dbReference type="TAIR" id="AT1G65240">
    <property type="gene designation" value="A39"/>
</dbReference>
<dbReference type="eggNOG" id="KOG1339">
    <property type="taxonomic scope" value="Eukaryota"/>
</dbReference>
<dbReference type="HOGENOM" id="CLU_005738_7_0_1"/>
<dbReference type="InParanoid" id="Q9S9K4"/>
<dbReference type="OMA" id="IGWTEYD"/>
<dbReference type="PhylomeDB" id="Q9S9K4"/>
<dbReference type="PRO" id="PR:Q9S9K4"/>
<dbReference type="Proteomes" id="UP000006548">
    <property type="component" value="Chromosome 1"/>
</dbReference>
<dbReference type="ExpressionAtlas" id="Q9S9K4">
    <property type="expression patterns" value="baseline and differential"/>
</dbReference>
<dbReference type="GO" id="GO:0005737">
    <property type="term" value="C:cytoplasm"/>
    <property type="evidence" value="ECO:0000314"/>
    <property type="project" value="UniProtKB"/>
</dbReference>
<dbReference type="GO" id="GO:0005829">
    <property type="term" value="C:cytosol"/>
    <property type="evidence" value="ECO:0000314"/>
    <property type="project" value="UniProtKB"/>
</dbReference>
<dbReference type="GO" id="GO:0005886">
    <property type="term" value="C:plasma membrane"/>
    <property type="evidence" value="ECO:0000314"/>
    <property type="project" value="UniProtKB"/>
</dbReference>
<dbReference type="GO" id="GO:0090406">
    <property type="term" value="C:pollen tube"/>
    <property type="evidence" value="ECO:0000314"/>
    <property type="project" value="UniProtKB"/>
</dbReference>
<dbReference type="GO" id="GO:0098552">
    <property type="term" value="C:side of membrane"/>
    <property type="evidence" value="ECO:0007669"/>
    <property type="project" value="UniProtKB-KW"/>
</dbReference>
<dbReference type="GO" id="GO:0004190">
    <property type="term" value="F:aspartic-type endopeptidase activity"/>
    <property type="evidence" value="ECO:0000314"/>
    <property type="project" value="UniProtKB"/>
</dbReference>
<dbReference type="GO" id="GO:0009860">
    <property type="term" value="P:pollen tube growth"/>
    <property type="evidence" value="ECO:0000315"/>
    <property type="project" value="UniProtKB"/>
</dbReference>
<dbReference type="GO" id="GO:0010183">
    <property type="term" value="P:pollen tube guidance"/>
    <property type="evidence" value="ECO:0000315"/>
    <property type="project" value="UniProtKB"/>
</dbReference>
<dbReference type="GO" id="GO:0030163">
    <property type="term" value="P:protein catabolic process"/>
    <property type="evidence" value="ECO:0000314"/>
    <property type="project" value="UniProtKB"/>
</dbReference>
<dbReference type="GO" id="GO:0006508">
    <property type="term" value="P:proteolysis"/>
    <property type="evidence" value="ECO:0000314"/>
    <property type="project" value="UniProtKB"/>
</dbReference>
<dbReference type="CDD" id="cd05476">
    <property type="entry name" value="pepsin_A_like_plant"/>
    <property type="match status" value="1"/>
</dbReference>
<dbReference type="Gene3D" id="2.40.70.10">
    <property type="entry name" value="Acid Proteases"/>
    <property type="match status" value="2"/>
</dbReference>
<dbReference type="InterPro" id="IPR001461">
    <property type="entry name" value="Aspartic_peptidase_A1"/>
</dbReference>
<dbReference type="InterPro" id="IPR034161">
    <property type="entry name" value="Pepsin-like_plant"/>
</dbReference>
<dbReference type="InterPro" id="IPR033121">
    <property type="entry name" value="PEPTIDASE_A1"/>
</dbReference>
<dbReference type="InterPro" id="IPR021109">
    <property type="entry name" value="Peptidase_aspartic_dom_sf"/>
</dbReference>
<dbReference type="InterPro" id="IPR032799">
    <property type="entry name" value="TAXi_C"/>
</dbReference>
<dbReference type="InterPro" id="IPR032861">
    <property type="entry name" value="TAXi_N"/>
</dbReference>
<dbReference type="PANTHER" id="PTHR13683:SF634">
    <property type="entry name" value="ASPARTIC PROTEINASE 39"/>
    <property type="match status" value="1"/>
</dbReference>
<dbReference type="PANTHER" id="PTHR13683">
    <property type="entry name" value="ASPARTYL PROTEASES"/>
    <property type="match status" value="1"/>
</dbReference>
<dbReference type="Pfam" id="PF14541">
    <property type="entry name" value="TAXi_C"/>
    <property type="match status" value="1"/>
</dbReference>
<dbReference type="Pfam" id="PF14543">
    <property type="entry name" value="TAXi_N"/>
    <property type="match status" value="1"/>
</dbReference>
<dbReference type="PRINTS" id="PR00792">
    <property type="entry name" value="PEPSIN"/>
</dbReference>
<dbReference type="SUPFAM" id="SSF50630">
    <property type="entry name" value="Acid proteases"/>
    <property type="match status" value="1"/>
</dbReference>
<dbReference type="PROSITE" id="PS51767">
    <property type="entry name" value="PEPTIDASE_A1"/>
    <property type="match status" value="1"/>
</dbReference>
<organism>
    <name type="scientific">Arabidopsis thaliana</name>
    <name type="common">Mouse-ear cress</name>
    <dbReference type="NCBI Taxonomy" id="3702"/>
    <lineage>
        <taxon>Eukaryota</taxon>
        <taxon>Viridiplantae</taxon>
        <taxon>Streptophyta</taxon>
        <taxon>Embryophyta</taxon>
        <taxon>Tracheophyta</taxon>
        <taxon>Spermatophyta</taxon>
        <taxon>Magnoliopsida</taxon>
        <taxon>eudicotyledons</taxon>
        <taxon>Gunneridae</taxon>
        <taxon>Pentapetalae</taxon>
        <taxon>rosids</taxon>
        <taxon>malvids</taxon>
        <taxon>Brassicales</taxon>
        <taxon>Brassicaceae</taxon>
        <taxon>Camelineae</taxon>
        <taxon>Arabidopsis</taxon>
    </lineage>
</organism>
<feature type="signal peptide" evidence="1">
    <location>
        <begin position="1"/>
        <end position="23"/>
    </location>
</feature>
<feature type="chain" id="PRO_0000259444" description="Aspartic proteinase 39">
    <location>
        <begin position="24"/>
        <end position="449"/>
    </location>
</feature>
<feature type="propeptide" id="PRO_0000259445" description="Removed in mature form" evidence="1">
    <location>
        <begin position="450"/>
        <end position="475"/>
    </location>
</feature>
<feature type="domain" description="Peptidase A1" evidence="3">
    <location>
        <begin position="74"/>
        <end position="422"/>
    </location>
</feature>
<feature type="active site" evidence="3">
    <location>
        <position position="92"/>
    </location>
</feature>
<feature type="active site" evidence="3">
    <location>
        <position position="303"/>
    </location>
</feature>
<feature type="lipid moiety-binding region" description="GPI-anchor amidated serine" evidence="1">
    <location>
        <position position="449"/>
    </location>
</feature>
<feature type="glycosylation site" description="N-linked (GlcNAc...) asparagine" evidence="2">
    <location>
        <position position="124"/>
    </location>
</feature>
<feature type="glycosylation site" description="N-linked (GlcNAc...) asparagine" evidence="2">
    <location>
        <position position="222"/>
    </location>
</feature>
<feature type="glycosylation site" description="N-linked (GlcNAc...) asparagine" evidence="2">
    <location>
        <position position="425"/>
    </location>
</feature>
<feature type="glycosylation site" description="N-linked (GlcNAc...) asparagine" evidence="2">
    <location>
        <position position="446"/>
    </location>
</feature>
<feature type="mutagenesis site" description="Impaired proteolytic activity." evidence="4">
    <original>D</original>
    <variation>N</variation>
    <location>
        <position position="92"/>
    </location>
</feature>
<keyword id="KW-0064">Aspartyl protease</keyword>
<keyword id="KW-1003">Cell membrane</keyword>
<keyword id="KW-0963">Cytoplasm</keyword>
<keyword id="KW-0325">Glycoprotein</keyword>
<keyword id="KW-0336">GPI-anchor</keyword>
<keyword id="KW-0378">Hydrolase</keyword>
<keyword id="KW-0449">Lipoprotein</keyword>
<keyword id="KW-0472">Membrane</keyword>
<keyword id="KW-0645">Protease</keyword>
<keyword id="KW-1185">Reference proteome</keyword>
<keyword id="KW-0732">Signal</keyword>
<evidence type="ECO:0000255" key="1"/>
<evidence type="ECO:0000255" key="2">
    <source>
        <dbReference type="PROSITE-ProRule" id="PRU00498"/>
    </source>
</evidence>
<evidence type="ECO:0000255" key="3">
    <source>
        <dbReference type="PROSITE-ProRule" id="PRU01103"/>
    </source>
</evidence>
<evidence type="ECO:0000269" key="4">
    <source>
    </source>
</evidence>
<evidence type="ECO:0000303" key="5">
    <source>
    </source>
</evidence>
<evidence type="ECO:0000305" key="6"/>
<evidence type="ECO:0000312" key="7">
    <source>
        <dbReference type="Araport" id="AT1G65240"/>
    </source>
</evidence>
<evidence type="ECO:0000312" key="8">
    <source>
        <dbReference type="EMBL" id="AAD26876.1"/>
    </source>
</evidence>
<reference key="1">
    <citation type="journal article" date="2000" name="Nature">
        <title>Sequence and analysis of chromosome 1 of the plant Arabidopsis thaliana.</title>
        <authorList>
            <person name="Theologis A."/>
            <person name="Ecker J.R."/>
            <person name="Palm C.J."/>
            <person name="Federspiel N.A."/>
            <person name="Kaul S."/>
            <person name="White O."/>
            <person name="Alonso J."/>
            <person name="Altafi H."/>
            <person name="Araujo R."/>
            <person name="Bowman C.L."/>
            <person name="Brooks S.Y."/>
            <person name="Buehler E."/>
            <person name="Chan A."/>
            <person name="Chao Q."/>
            <person name="Chen H."/>
            <person name="Cheuk R.F."/>
            <person name="Chin C.W."/>
            <person name="Chung M.K."/>
            <person name="Conn L."/>
            <person name="Conway A.B."/>
            <person name="Conway A.R."/>
            <person name="Creasy T.H."/>
            <person name="Dewar K."/>
            <person name="Dunn P."/>
            <person name="Etgu P."/>
            <person name="Feldblyum T.V."/>
            <person name="Feng J.-D."/>
            <person name="Fong B."/>
            <person name="Fujii C.Y."/>
            <person name="Gill J.E."/>
            <person name="Goldsmith A.D."/>
            <person name="Haas B."/>
            <person name="Hansen N.F."/>
            <person name="Hughes B."/>
            <person name="Huizar L."/>
            <person name="Hunter J.L."/>
            <person name="Jenkins J."/>
            <person name="Johnson-Hopson C."/>
            <person name="Khan S."/>
            <person name="Khaykin E."/>
            <person name="Kim C.J."/>
            <person name="Koo H.L."/>
            <person name="Kremenetskaia I."/>
            <person name="Kurtz D.B."/>
            <person name="Kwan A."/>
            <person name="Lam B."/>
            <person name="Langin-Hooper S."/>
            <person name="Lee A."/>
            <person name="Lee J.M."/>
            <person name="Lenz C.A."/>
            <person name="Li J.H."/>
            <person name="Li Y.-P."/>
            <person name="Lin X."/>
            <person name="Liu S.X."/>
            <person name="Liu Z.A."/>
            <person name="Luros J.S."/>
            <person name="Maiti R."/>
            <person name="Marziali A."/>
            <person name="Militscher J."/>
            <person name="Miranda M."/>
            <person name="Nguyen M."/>
            <person name="Nierman W.C."/>
            <person name="Osborne B.I."/>
            <person name="Pai G."/>
            <person name="Peterson J."/>
            <person name="Pham P.K."/>
            <person name="Rizzo M."/>
            <person name="Rooney T."/>
            <person name="Rowley D."/>
            <person name="Sakano H."/>
            <person name="Salzberg S.L."/>
            <person name="Schwartz J.R."/>
            <person name="Shinn P."/>
            <person name="Southwick A.M."/>
            <person name="Sun H."/>
            <person name="Tallon L.J."/>
            <person name="Tambunga G."/>
            <person name="Toriumi M.J."/>
            <person name="Town C.D."/>
            <person name="Utterback T."/>
            <person name="Van Aken S."/>
            <person name="Vaysberg M."/>
            <person name="Vysotskaia V.S."/>
            <person name="Walker M."/>
            <person name="Wu D."/>
            <person name="Yu G."/>
            <person name="Fraser C.M."/>
            <person name="Venter J.C."/>
            <person name="Davis R.W."/>
        </authorList>
    </citation>
    <scope>NUCLEOTIDE SEQUENCE [LARGE SCALE GENOMIC DNA]</scope>
    <source>
        <strain>cv. Columbia</strain>
    </source>
</reference>
<reference key="2">
    <citation type="journal article" date="2017" name="Plant J.">
        <title>Araport11: a complete reannotation of the Arabidopsis thaliana reference genome.</title>
        <authorList>
            <person name="Cheng C.Y."/>
            <person name="Krishnakumar V."/>
            <person name="Chan A.P."/>
            <person name="Thibaud-Nissen F."/>
            <person name="Schobel S."/>
            <person name="Town C.D."/>
        </authorList>
    </citation>
    <scope>GENOME REANNOTATION</scope>
    <source>
        <strain>cv. Columbia</strain>
    </source>
</reference>
<reference key="3">
    <citation type="journal article" date="2017" name="Plant Physiol.">
        <title>Two membrane-anchored aspartic proteases contribute to pollen and ovule development.</title>
        <authorList>
            <person name="Gao H."/>
            <person name="Zhang Y."/>
            <person name="Wang W."/>
            <person name="Zhao K."/>
            <person name="Liu C."/>
            <person name="Bai L."/>
            <person name="Li R."/>
            <person name="Guo Y."/>
        </authorList>
    </citation>
    <scope>FUNCTION</scope>
    <scope>MUTAGENESIS OF ASP-92</scope>
    <scope>DISRUPTION PHENOTYPE</scope>
    <scope>TISSUE SPECIFICITY</scope>
    <scope>SUBCELLULAR LOCATION</scope>
    <scope>DEVELOPMENTAL STAGE</scope>
    <source>
        <strain>cv. Columbia</strain>
    </source>
</reference>
<reference key="4">
    <citation type="journal article" date="2017" name="Plant Signal. Behav.">
        <title>Arabidopsis aspartic proteases A36 and A39 play roles in plant reproduction.</title>
        <authorList>
            <person name="Gao H."/>
            <person name="Li R."/>
            <person name="Guo Y."/>
        </authorList>
    </citation>
    <scope>REVIEW</scope>
</reference>
<name>ASP39_ARATH</name>
<gene>
    <name evidence="5" type="primary">A39</name>
    <name evidence="7" type="ordered locus">At1g65240</name>
    <name evidence="8" type="ORF">T23K8.15</name>
</gene>
<protein>
    <recommendedName>
        <fullName evidence="5">Aspartic proteinase 39</fullName>
        <ecNumber evidence="4">3.4.23.-</ecNumber>
    </recommendedName>
</protein>